<gene>
    <name evidence="1" type="primary">atpC</name>
    <name type="ordered locus">SAHV_2086</name>
</gene>
<keyword id="KW-0066">ATP synthesis</keyword>
<keyword id="KW-1003">Cell membrane</keyword>
<keyword id="KW-0139">CF(1)</keyword>
<keyword id="KW-0375">Hydrogen ion transport</keyword>
<keyword id="KW-0406">Ion transport</keyword>
<keyword id="KW-0472">Membrane</keyword>
<keyword id="KW-0813">Transport</keyword>
<comment type="function">
    <text evidence="1">Produces ATP from ADP in the presence of a proton gradient across the membrane.</text>
</comment>
<comment type="subunit">
    <text evidence="1">F-type ATPases have 2 components, CF(1) - the catalytic core - and CF(0) - the membrane proton channel. CF(1) has five subunits: alpha(3), beta(3), gamma(1), delta(1), epsilon(1). CF(0) has three main subunits: a, b and c.</text>
</comment>
<comment type="subcellular location">
    <subcellularLocation>
        <location evidence="1">Cell membrane</location>
        <topology evidence="1">Peripheral membrane protein</topology>
    </subcellularLocation>
</comment>
<comment type="similarity">
    <text evidence="1">Belongs to the ATPase epsilon chain family.</text>
</comment>
<reference key="1">
    <citation type="journal article" date="2008" name="Antimicrob. Agents Chemother.">
        <title>Mutated response regulator graR is responsible for phenotypic conversion of Staphylococcus aureus from heterogeneous vancomycin-intermediate resistance to vancomycin-intermediate resistance.</title>
        <authorList>
            <person name="Neoh H.-M."/>
            <person name="Cui L."/>
            <person name="Yuzawa H."/>
            <person name="Takeuchi F."/>
            <person name="Matsuo M."/>
            <person name="Hiramatsu K."/>
        </authorList>
    </citation>
    <scope>NUCLEOTIDE SEQUENCE [LARGE SCALE GENOMIC DNA]</scope>
    <source>
        <strain>Mu3 / ATCC 700698</strain>
    </source>
</reference>
<feature type="chain" id="PRO_1000056539" description="ATP synthase epsilon chain">
    <location>
        <begin position="1"/>
        <end position="134"/>
    </location>
</feature>
<proteinExistence type="inferred from homology"/>
<name>ATPE_STAA1</name>
<sequence length="134" mass="14844">MNTLNLDIVTPNGSVYNRDNVELVVMQTTAGEIGVMSGHIPTVAALKTGFVKVKFHDGTEYIAVSDGFVEVRKDKVSIIVQTAETAREIDVERAKLAKARAESHLENDDDNTDIHRAERALERANNRLRVAELK</sequence>
<organism>
    <name type="scientific">Staphylococcus aureus (strain Mu3 / ATCC 700698)</name>
    <dbReference type="NCBI Taxonomy" id="418127"/>
    <lineage>
        <taxon>Bacteria</taxon>
        <taxon>Bacillati</taxon>
        <taxon>Bacillota</taxon>
        <taxon>Bacilli</taxon>
        <taxon>Bacillales</taxon>
        <taxon>Staphylococcaceae</taxon>
        <taxon>Staphylococcus</taxon>
    </lineage>
</organism>
<protein>
    <recommendedName>
        <fullName evidence="1">ATP synthase epsilon chain</fullName>
    </recommendedName>
    <alternativeName>
        <fullName evidence="1">ATP synthase F1 sector epsilon subunit</fullName>
    </alternativeName>
    <alternativeName>
        <fullName evidence="1">F-ATPase epsilon subunit</fullName>
    </alternativeName>
</protein>
<dbReference type="EMBL" id="AP009324">
    <property type="protein sequence ID" value="BAF78969.1"/>
    <property type="molecule type" value="Genomic_DNA"/>
</dbReference>
<dbReference type="RefSeq" id="WP_001094394.1">
    <property type="nucleotide sequence ID" value="NC_009782.1"/>
</dbReference>
<dbReference type="SMR" id="A7X4U2"/>
<dbReference type="KEGG" id="saw:SAHV_2086"/>
<dbReference type="HOGENOM" id="CLU_084338_1_3_9"/>
<dbReference type="GO" id="GO:0005886">
    <property type="term" value="C:plasma membrane"/>
    <property type="evidence" value="ECO:0007669"/>
    <property type="project" value="UniProtKB-SubCell"/>
</dbReference>
<dbReference type="GO" id="GO:0045259">
    <property type="term" value="C:proton-transporting ATP synthase complex"/>
    <property type="evidence" value="ECO:0007669"/>
    <property type="project" value="UniProtKB-KW"/>
</dbReference>
<dbReference type="GO" id="GO:0005524">
    <property type="term" value="F:ATP binding"/>
    <property type="evidence" value="ECO:0007669"/>
    <property type="project" value="UniProtKB-UniRule"/>
</dbReference>
<dbReference type="GO" id="GO:0046933">
    <property type="term" value="F:proton-transporting ATP synthase activity, rotational mechanism"/>
    <property type="evidence" value="ECO:0007669"/>
    <property type="project" value="UniProtKB-UniRule"/>
</dbReference>
<dbReference type="CDD" id="cd12152">
    <property type="entry name" value="F1-ATPase_delta"/>
    <property type="match status" value="1"/>
</dbReference>
<dbReference type="FunFam" id="1.20.5.440:FF:000001">
    <property type="entry name" value="ATP synthase epsilon chain"/>
    <property type="match status" value="1"/>
</dbReference>
<dbReference type="FunFam" id="2.60.15.10:FF:000001">
    <property type="entry name" value="ATP synthase epsilon chain"/>
    <property type="match status" value="1"/>
</dbReference>
<dbReference type="Gene3D" id="1.20.5.440">
    <property type="entry name" value="ATP synthase delta/epsilon subunit, C-terminal domain"/>
    <property type="match status" value="1"/>
</dbReference>
<dbReference type="Gene3D" id="2.60.15.10">
    <property type="entry name" value="F0F1 ATP synthase delta/epsilon subunit, N-terminal"/>
    <property type="match status" value="1"/>
</dbReference>
<dbReference type="HAMAP" id="MF_00530">
    <property type="entry name" value="ATP_synth_epsil_bac"/>
    <property type="match status" value="1"/>
</dbReference>
<dbReference type="InterPro" id="IPR036794">
    <property type="entry name" value="ATP_F1_dsu/esu_C_sf"/>
</dbReference>
<dbReference type="InterPro" id="IPR001469">
    <property type="entry name" value="ATP_synth_F1_dsu/esu"/>
</dbReference>
<dbReference type="InterPro" id="IPR020546">
    <property type="entry name" value="ATP_synth_F1_dsu/esu_N"/>
</dbReference>
<dbReference type="InterPro" id="IPR020547">
    <property type="entry name" value="ATP_synth_F1_esu_C"/>
</dbReference>
<dbReference type="InterPro" id="IPR036771">
    <property type="entry name" value="ATPsynth_dsu/esu_N"/>
</dbReference>
<dbReference type="NCBIfam" id="TIGR01216">
    <property type="entry name" value="ATP_synt_epsi"/>
    <property type="match status" value="1"/>
</dbReference>
<dbReference type="NCBIfam" id="NF001846">
    <property type="entry name" value="PRK00571.1-3"/>
    <property type="match status" value="1"/>
</dbReference>
<dbReference type="NCBIfam" id="NF009980">
    <property type="entry name" value="PRK13446.1"/>
    <property type="match status" value="1"/>
</dbReference>
<dbReference type="PANTHER" id="PTHR13822">
    <property type="entry name" value="ATP SYNTHASE DELTA/EPSILON CHAIN"/>
    <property type="match status" value="1"/>
</dbReference>
<dbReference type="PANTHER" id="PTHR13822:SF10">
    <property type="entry name" value="ATP SYNTHASE EPSILON CHAIN, CHLOROPLASTIC"/>
    <property type="match status" value="1"/>
</dbReference>
<dbReference type="Pfam" id="PF00401">
    <property type="entry name" value="ATP-synt_DE"/>
    <property type="match status" value="1"/>
</dbReference>
<dbReference type="Pfam" id="PF02823">
    <property type="entry name" value="ATP-synt_DE_N"/>
    <property type="match status" value="1"/>
</dbReference>
<dbReference type="SUPFAM" id="SSF46604">
    <property type="entry name" value="Epsilon subunit of F1F0-ATP synthase C-terminal domain"/>
    <property type="match status" value="1"/>
</dbReference>
<dbReference type="SUPFAM" id="SSF51344">
    <property type="entry name" value="Epsilon subunit of F1F0-ATP synthase N-terminal domain"/>
    <property type="match status" value="1"/>
</dbReference>
<accession>A7X4U2</accession>
<evidence type="ECO:0000255" key="1">
    <source>
        <dbReference type="HAMAP-Rule" id="MF_00530"/>
    </source>
</evidence>